<evidence type="ECO:0000255" key="1">
    <source>
        <dbReference type="HAMAP-Rule" id="MF_00473"/>
    </source>
</evidence>
<keyword id="KW-0963">Cytoplasm</keyword>
<keyword id="KW-0312">Gluconeogenesis</keyword>
<keyword id="KW-0324">Glycolysis</keyword>
<keyword id="KW-0413">Isomerase</keyword>
<keyword id="KW-1185">Reference proteome</keyword>
<comment type="function">
    <text evidence="1">Catalyzes the reversible isomerization of glucose-6-phosphate to fructose-6-phosphate.</text>
</comment>
<comment type="catalytic activity">
    <reaction evidence="1">
        <text>alpha-D-glucose 6-phosphate = beta-D-fructose 6-phosphate</text>
        <dbReference type="Rhea" id="RHEA:11816"/>
        <dbReference type="ChEBI" id="CHEBI:57634"/>
        <dbReference type="ChEBI" id="CHEBI:58225"/>
        <dbReference type="EC" id="5.3.1.9"/>
    </reaction>
</comment>
<comment type="pathway">
    <text evidence="1">Carbohydrate biosynthesis; gluconeogenesis.</text>
</comment>
<comment type="pathway">
    <text evidence="1">Carbohydrate degradation; glycolysis; D-glyceraldehyde 3-phosphate and glycerone phosphate from D-glucose: step 2/4.</text>
</comment>
<comment type="subcellular location">
    <subcellularLocation>
        <location evidence="1">Cytoplasm</location>
    </subcellularLocation>
</comment>
<comment type="similarity">
    <text evidence="1">Belongs to the GPI family.</text>
</comment>
<accession>Q1GAY0</accession>
<name>G6PI_LACDA</name>
<protein>
    <recommendedName>
        <fullName evidence="1">Glucose-6-phosphate isomerase</fullName>
        <shortName evidence="1">GPI</shortName>
        <ecNumber evidence="1">5.3.1.9</ecNumber>
    </recommendedName>
    <alternativeName>
        <fullName evidence="1">Phosphoglucose isomerase</fullName>
        <shortName evidence="1">PGI</shortName>
    </alternativeName>
    <alternativeName>
        <fullName evidence="1">Phosphohexose isomerase</fullName>
        <shortName evidence="1">PHI</shortName>
    </alternativeName>
</protein>
<organism>
    <name type="scientific">Lactobacillus delbrueckii subsp. bulgaricus (strain ATCC 11842 / DSM 20081 / BCRC 10696 / JCM 1002 / NBRC 13953 / NCIMB 11778 / NCTC 12712 / WDCM 00102 / Lb 14)</name>
    <dbReference type="NCBI Taxonomy" id="390333"/>
    <lineage>
        <taxon>Bacteria</taxon>
        <taxon>Bacillati</taxon>
        <taxon>Bacillota</taxon>
        <taxon>Bacilli</taxon>
        <taxon>Lactobacillales</taxon>
        <taxon>Lactobacillaceae</taxon>
        <taxon>Lactobacillus</taxon>
    </lineage>
</organism>
<dbReference type="EC" id="5.3.1.9" evidence="1"/>
<dbReference type="EMBL" id="CR954253">
    <property type="protein sequence ID" value="CAI97521.1"/>
    <property type="molecule type" value="Genomic_DNA"/>
</dbReference>
<dbReference type="RefSeq" id="WP_011543757.1">
    <property type="nucleotide sequence ID" value="NZ_JQAV01000001.1"/>
</dbReference>
<dbReference type="SMR" id="Q1GAY0"/>
<dbReference type="STRING" id="390333.Ldb0692"/>
<dbReference type="KEGG" id="ldb:Ldb0692"/>
<dbReference type="PATRIC" id="fig|390333.13.peg.107"/>
<dbReference type="eggNOG" id="COG0166">
    <property type="taxonomic scope" value="Bacteria"/>
</dbReference>
<dbReference type="HOGENOM" id="CLU_037303_0_1_9"/>
<dbReference type="BioCyc" id="LDEL390333:LDB_RS03005-MONOMER"/>
<dbReference type="UniPathway" id="UPA00109">
    <property type="reaction ID" value="UER00181"/>
</dbReference>
<dbReference type="UniPathway" id="UPA00138"/>
<dbReference type="Proteomes" id="UP000001259">
    <property type="component" value="Chromosome"/>
</dbReference>
<dbReference type="GO" id="GO:0005829">
    <property type="term" value="C:cytosol"/>
    <property type="evidence" value="ECO:0007669"/>
    <property type="project" value="TreeGrafter"/>
</dbReference>
<dbReference type="GO" id="GO:0097367">
    <property type="term" value="F:carbohydrate derivative binding"/>
    <property type="evidence" value="ECO:0007669"/>
    <property type="project" value="InterPro"/>
</dbReference>
<dbReference type="GO" id="GO:0004347">
    <property type="term" value="F:glucose-6-phosphate isomerase activity"/>
    <property type="evidence" value="ECO:0007669"/>
    <property type="project" value="UniProtKB-UniRule"/>
</dbReference>
<dbReference type="GO" id="GO:0048029">
    <property type="term" value="F:monosaccharide binding"/>
    <property type="evidence" value="ECO:0007669"/>
    <property type="project" value="TreeGrafter"/>
</dbReference>
<dbReference type="GO" id="GO:0006094">
    <property type="term" value="P:gluconeogenesis"/>
    <property type="evidence" value="ECO:0007669"/>
    <property type="project" value="UniProtKB-UniRule"/>
</dbReference>
<dbReference type="GO" id="GO:0051156">
    <property type="term" value="P:glucose 6-phosphate metabolic process"/>
    <property type="evidence" value="ECO:0007669"/>
    <property type="project" value="TreeGrafter"/>
</dbReference>
<dbReference type="GO" id="GO:0006096">
    <property type="term" value="P:glycolytic process"/>
    <property type="evidence" value="ECO:0007669"/>
    <property type="project" value="UniProtKB-UniRule"/>
</dbReference>
<dbReference type="CDD" id="cd05015">
    <property type="entry name" value="SIS_PGI_1"/>
    <property type="match status" value="1"/>
</dbReference>
<dbReference type="CDD" id="cd05016">
    <property type="entry name" value="SIS_PGI_2"/>
    <property type="match status" value="1"/>
</dbReference>
<dbReference type="FunFam" id="3.40.50.10490:FF:000015">
    <property type="entry name" value="Glucose-6-phosphate isomerase"/>
    <property type="match status" value="1"/>
</dbReference>
<dbReference type="FunFam" id="3.40.50.10490:FF:000016">
    <property type="entry name" value="Glucose-6-phosphate isomerase"/>
    <property type="match status" value="1"/>
</dbReference>
<dbReference type="Gene3D" id="3.40.50.10490">
    <property type="entry name" value="Glucose-6-phosphate isomerase like protein, domain 1"/>
    <property type="match status" value="3"/>
</dbReference>
<dbReference type="HAMAP" id="MF_00473">
    <property type="entry name" value="G6P_isomerase"/>
    <property type="match status" value="1"/>
</dbReference>
<dbReference type="InterPro" id="IPR001672">
    <property type="entry name" value="G6P_Isomerase"/>
</dbReference>
<dbReference type="InterPro" id="IPR018189">
    <property type="entry name" value="Phosphoglucose_isomerase_CS"/>
</dbReference>
<dbReference type="InterPro" id="IPR046348">
    <property type="entry name" value="SIS_dom_sf"/>
</dbReference>
<dbReference type="InterPro" id="IPR035476">
    <property type="entry name" value="SIS_PGI_1"/>
</dbReference>
<dbReference type="InterPro" id="IPR035482">
    <property type="entry name" value="SIS_PGI_2"/>
</dbReference>
<dbReference type="NCBIfam" id="NF010697">
    <property type="entry name" value="PRK14097.1"/>
    <property type="match status" value="1"/>
</dbReference>
<dbReference type="PANTHER" id="PTHR11469">
    <property type="entry name" value="GLUCOSE-6-PHOSPHATE ISOMERASE"/>
    <property type="match status" value="1"/>
</dbReference>
<dbReference type="PANTHER" id="PTHR11469:SF1">
    <property type="entry name" value="GLUCOSE-6-PHOSPHATE ISOMERASE"/>
    <property type="match status" value="1"/>
</dbReference>
<dbReference type="Pfam" id="PF00342">
    <property type="entry name" value="PGI"/>
    <property type="match status" value="1"/>
</dbReference>
<dbReference type="PRINTS" id="PR00662">
    <property type="entry name" value="G6PISOMERASE"/>
</dbReference>
<dbReference type="SUPFAM" id="SSF53697">
    <property type="entry name" value="SIS domain"/>
    <property type="match status" value="1"/>
</dbReference>
<dbReference type="PROSITE" id="PS00765">
    <property type="entry name" value="P_GLUCOSE_ISOMERASE_1"/>
    <property type="match status" value="1"/>
</dbReference>
<dbReference type="PROSITE" id="PS00174">
    <property type="entry name" value="P_GLUCOSE_ISOMERASE_2"/>
    <property type="match status" value="1"/>
</dbReference>
<dbReference type="PROSITE" id="PS51463">
    <property type="entry name" value="P_GLUCOSE_ISOMERASE_3"/>
    <property type="match status" value="1"/>
</dbReference>
<sequence>MNSVVSFDSSKLTPFVHENELKEMQAMVNAADKELREGTGAGNDFRGWLDLPVDYDKDEFARIKKAAKKIQSDSDVLIGIGIGGSYLGAQAAIEFLNSSFYMAEKSDYPKVVFCGNSLSGTYLSDLINWLGDKDFSLNIISKSGTTTEPSVAFRVLKAKLIEKYGKEEAAKRIYATTDRQKGALKIEADAEGYEEFVVPDDVGGRFSVLSAVGLLPIAAAGCDIDALMQGAADARAAYTDPDVSKDSPYQYAALRNILYRKGYTTELLENYEPSIRMFGEWWKQLMGESEGKDQKGIYPSSANFTTDLHSLGQYIQEGRRNLMETVVRVAGPRADVEIPNDESNLDQLNFLAGKKMNYVNDRAYEGVVLAHTDGGVPVMTVNIADQSEHTLGYLIYWFELSVAISGYLNGINPFNQPGVEAYKRNMFGLLNKPGYEDLHDELASRL</sequence>
<feature type="chain" id="PRO_0000252626" description="Glucose-6-phosphate isomerase">
    <location>
        <begin position="1"/>
        <end position="446"/>
    </location>
</feature>
<feature type="active site" description="Proton donor" evidence="1">
    <location>
        <position position="288"/>
    </location>
</feature>
<feature type="active site" evidence="1">
    <location>
        <position position="309"/>
    </location>
</feature>
<feature type="active site" evidence="1">
    <location>
        <position position="423"/>
    </location>
</feature>
<proteinExistence type="inferred from homology"/>
<gene>
    <name evidence="1" type="primary">pgi</name>
    <name type="ordered locus">Ldb0692</name>
</gene>
<reference key="1">
    <citation type="journal article" date="2006" name="Proc. Natl. Acad. Sci. U.S.A.">
        <title>The complete genome sequence of Lactobacillus bulgaricus reveals extensive and ongoing reductive evolution.</title>
        <authorList>
            <person name="van de Guchte M."/>
            <person name="Penaud S."/>
            <person name="Grimaldi C."/>
            <person name="Barbe V."/>
            <person name="Bryson K."/>
            <person name="Nicolas P."/>
            <person name="Robert C."/>
            <person name="Oztas S."/>
            <person name="Mangenot S."/>
            <person name="Couloux A."/>
            <person name="Loux V."/>
            <person name="Dervyn R."/>
            <person name="Bossy R."/>
            <person name="Bolotin A."/>
            <person name="Batto J.-M."/>
            <person name="Walunas T."/>
            <person name="Gibrat J.-F."/>
            <person name="Bessieres P."/>
            <person name="Weissenbach J."/>
            <person name="Ehrlich S.D."/>
            <person name="Maguin E."/>
        </authorList>
    </citation>
    <scope>NUCLEOTIDE SEQUENCE [LARGE SCALE GENOMIC DNA]</scope>
    <source>
        <strain>ATCC 11842 / DSM 20081 / BCRC 10696 / JCM 1002 / NBRC 13953 / NCIMB 11778 / NCTC 12712 / WDCM 00102 / Lb 14</strain>
    </source>
</reference>